<protein>
    <recommendedName>
        <fullName>Guanylate cyclase soluble subunit beta-2</fullName>
        <shortName>GCS-beta-2</shortName>
        <ecNumber>4.6.1.2</ecNumber>
    </recommendedName>
</protein>
<feature type="chain" id="PRO_0000074120" description="Guanylate cyclase soluble subunit beta-2">
    <location>
        <begin position="1"/>
        <end position="682"/>
    </location>
</feature>
<feature type="domain" description="Guanylate cyclase" evidence="2">
    <location>
        <begin position="408"/>
        <end position="536"/>
    </location>
</feature>
<feature type="region of interest" description="Disordered" evidence="3">
    <location>
        <begin position="592"/>
        <end position="667"/>
    </location>
</feature>
<feature type="compositionally biased region" description="Polar residues" evidence="3">
    <location>
        <begin position="649"/>
        <end position="667"/>
    </location>
</feature>
<feature type="binding site" description="proximal binding residue" evidence="1">
    <location>
        <position position="43"/>
    </location>
    <ligand>
        <name>heme</name>
        <dbReference type="ChEBI" id="CHEBI:30413"/>
    </ligand>
    <ligandPart>
        <name>Fe</name>
        <dbReference type="ChEBI" id="CHEBI:18248"/>
    </ligandPart>
</feature>
<name>GCYB2_RAT</name>
<gene>
    <name type="primary">Gucy1b2</name>
</gene>
<dbReference type="EC" id="4.6.1.2"/>
<dbReference type="EMBL" id="M57507">
    <property type="protein sequence ID" value="AAA41207.1"/>
    <property type="molecule type" value="mRNA"/>
</dbReference>
<dbReference type="PIR" id="A36228">
    <property type="entry name" value="OYRTB2"/>
</dbReference>
<dbReference type="RefSeq" id="NP_001257640.1">
    <property type="nucleotide sequence ID" value="NM_001270711.1"/>
</dbReference>
<dbReference type="RefSeq" id="NP_036902.2">
    <property type="nucleotide sequence ID" value="NM_012770.2"/>
</dbReference>
<dbReference type="SMR" id="P22717"/>
<dbReference type="CORUM" id="P22717"/>
<dbReference type="FunCoup" id="P22717">
    <property type="interactions" value="183"/>
</dbReference>
<dbReference type="STRING" id="10116.ENSRNOP00000012948"/>
<dbReference type="PhosphoSitePlus" id="P22717"/>
<dbReference type="PaxDb" id="10116-ENSRNOP00000012948"/>
<dbReference type="GeneID" id="25206"/>
<dbReference type="KEGG" id="rno:25206"/>
<dbReference type="UCSC" id="RGD:2770">
    <property type="organism name" value="rat"/>
</dbReference>
<dbReference type="AGR" id="RGD:2770"/>
<dbReference type="CTD" id="2974"/>
<dbReference type="RGD" id="2770">
    <property type="gene designation" value="Gucy1b2"/>
</dbReference>
<dbReference type="eggNOG" id="KOG4171">
    <property type="taxonomic scope" value="Eukaryota"/>
</dbReference>
<dbReference type="InParanoid" id="P22717"/>
<dbReference type="OrthoDB" id="58586at9989"/>
<dbReference type="PhylomeDB" id="P22717"/>
<dbReference type="Reactome" id="R-RNO-445355">
    <property type="pathway name" value="Smooth Muscle Contraction"/>
</dbReference>
<dbReference type="PRO" id="PR:P22717"/>
<dbReference type="Proteomes" id="UP000002494">
    <property type="component" value="Unplaced"/>
</dbReference>
<dbReference type="GO" id="GO:0005829">
    <property type="term" value="C:cytosol"/>
    <property type="evidence" value="ECO:0000304"/>
    <property type="project" value="Reactome"/>
</dbReference>
<dbReference type="GO" id="GO:0008074">
    <property type="term" value="C:guanylate cyclase complex, soluble"/>
    <property type="evidence" value="ECO:0000318"/>
    <property type="project" value="GO_Central"/>
</dbReference>
<dbReference type="GO" id="GO:0005525">
    <property type="term" value="F:GTP binding"/>
    <property type="evidence" value="ECO:0007669"/>
    <property type="project" value="UniProtKB-KW"/>
</dbReference>
<dbReference type="GO" id="GO:0004383">
    <property type="term" value="F:guanylate cyclase activity"/>
    <property type="evidence" value="ECO:0000318"/>
    <property type="project" value="GO_Central"/>
</dbReference>
<dbReference type="GO" id="GO:0020037">
    <property type="term" value="F:heme binding"/>
    <property type="evidence" value="ECO:0007669"/>
    <property type="project" value="InterPro"/>
</dbReference>
<dbReference type="GO" id="GO:0046872">
    <property type="term" value="F:metal ion binding"/>
    <property type="evidence" value="ECO:0007669"/>
    <property type="project" value="UniProtKB-KW"/>
</dbReference>
<dbReference type="GO" id="GO:0070026">
    <property type="term" value="F:nitric oxide binding"/>
    <property type="evidence" value="ECO:0000314"/>
    <property type="project" value="RGD"/>
</dbReference>
<dbReference type="GO" id="GO:0019934">
    <property type="term" value="P:cGMP-mediated signaling"/>
    <property type="evidence" value="ECO:0000318"/>
    <property type="project" value="GO_Central"/>
</dbReference>
<dbReference type="GO" id="GO:0070482">
    <property type="term" value="P:response to oxygen levels"/>
    <property type="evidence" value="ECO:0000318"/>
    <property type="project" value="GO_Central"/>
</dbReference>
<dbReference type="CDD" id="cd07302">
    <property type="entry name" value="CHD"/>
    <property type="match status" value="1"/>
</dbReference>
<dbReference type="FunFam" id="3.30.450.260:FF:000002">
    <property type="entry name" value="guanylate cyclase soluble subunit alpha-2"/>
    <property type="match status" value="1"/>
</dbReference>
<dbReference type="FunFam" id="3.30.70.1230:FF:000007">
    <property type="entry name" value="Guanylate cyclase soluble subunit alpha-3"/>
    <property type="match status" value="1"/>
</dbReference>
<dbReference type="FunFam" id="3.90.1520.10:FF:000009">
    <property type="entry name" value="Guanylate cyclase soluble subunit beta-2"/>
    <property type="match status" value="1"/>
</dbReference>
<dbReference type="Gene3D" id="6.10.250.780">
    <property type="match status" value="1"/>
</dbReference>
<dbReference type="Gene3D" id="3.90.1520.10">
    <property type="entry name" value="H-NOX domain"/>
    <property type="match status" value="1"/>
</dbReference>
<dbReference type="Gene3D" id="3.30.450.260">
    <property type="entry name" value="Haem NO binding associated domain"/>
    <property type="match status" value="1"/>
</dbReference>
<dbReference type="Gene3D" id="3.30.70.1230">
    <property type="entry name" value="Nucleotide cyclase"/>
    <property type="match status" value="1"/>
</dbReference>
<dbReference type="InterPro" id="IPR001054">
    <property type="entry name" value="A/G_cyclase"/>
</dbReference>
<dbReference type="InterPro" id="IPR018297">
    <property type="entry name" value="A/G_cyclase_CS"/>
</dbReference>
<dbReference type="InterPro" id="IPR038158">
    <property type="entry name" value="H-NOX_domain_sf"/>
</dbReference>
<dbReference type="InterPro" id="IPR011644">
    <property type="entry name" value="Heme_NO-bd"/>
</dbReference>
<dbReference type="InterPro" id="IPR011645">
    <property type="entry name" value="HNOB_dom_associated"/>
</dbReference>
<dbReference type="InterPro" id="IPR042463">
    <property type="entry name" value="HNOB_dom_associated_sf"/>
</dbReference>
<dbReference type="InterPro" id="IPR024096">
    <property type="entry name" value="NO_sig/Golgi_transp_ligand-bd"/>
</dbReference>
<dbReference type="InterPro" id="IPR029787">
    <property type="entry name" value="Nucleotide_cyclase"/>
</dbReference>
<dbReference type="PANTHER" id="PTHR45655">
    <property type="entry name" value="GUANYLATE CYCLASE SOLUBLE SUBUNIT BETA-2"/>
    <property type="match status" value="1"/>
</dbReference>
<dbReference type="PANTHER" id="PTHR45655:SF17">
    <property type="entry name" value="GUANYLATE CYCLASE SOLUBLE SUBUNIT BETA-2"/>
    <property type="match status" value="1"/>
</dbReference>
<dbReference type="Pfam" id="PF00211">
    <property type="entry name" value="Guanylate_cyc"/>
    <property type="match status" value="1"/>
</dbReference>
<dbReference type="Pfam" id="PF07700">
    <property type="entry name" value="HNOB"/>
    <property type="match status" value="1"/>
</dbReference>
<dbReference type="Pfam" id="PF07701">
    <property type="entry name" value="HNOBA"/>
    <property type="match status" value="1"/>
</dbReference>
<dbReference type="SMART" id="SM00044">
    <property type="entry name" value="CYCc"/>
    <property type="match status" value="1"/>
</dbReference>
<dbReference type="SUPFAM" id="SSF111126">
    <property type="entry name" value="Ligand-binding domain in the NO signalling and Golgi transport"/>
    <property type="match status" value="1"/>
</dbReference>
<dbReference type="SUPFAM" id="SSF55073">
    <property type="entry name" value="Nucleotide cyclase"/>
    <property type="match status" value="1"/>
</dbReference>
<dbReference type="PROSITE" id="PS00452">
    <property type="entry name" value="GUANYLATE_CYCLASE_1"/>
    <property type="match status" value="1"/>
</dbReference>
<dbReference type="PROSITE" id="PS50125">
    <property type="entry name" value="GUANYLATE_CYCLASE_2"/>
    <property type="match status" value="1"/>
</dbReference>
<proteinExistence type="evidence at transcript level"/>
<sequence length="682" mass="76197">MEAILKLFGEYFFKFCKMSGYDRMLRTLGGNLTEFIENLDALHSYLALSYQEMNAPSFRVEEGADGAMLLHYYSDRHGLCHIVPGIIEAVAKDFFDTDVAMSILDMNEEVERTGKKEHVVFLVVQKAHRQIRGAKASRPQGSEDSQADQEALQGTLLRMKERYLNIPVCPGEKSHSTAVRASVLFGKGPLRDTFQPVYPERLWVEEEVFCDAFPFHIVFDEALRVKQAGVNIQKYVPGILTQKFALDEYFSIIHPQVTFNISSICKFINSQFVLKTRKEMMPKARKSQPMLKLRGQMIWMESLRCMIFMCSPNVRSLQELEESKMHLSDIAPHDTTRDLILLNQQRLAEMELSCQLEKKKEELRVLSNHLAIEKKKTETLLYAMLPEHVANQLKEGRKVAAGEFETCTILFSDVVTFTNICAACEPIQIVNMLNSMYSKFDRLTSVHDVYKVETIGDAYMVVGGVPVPVESHAQRVANFALGMRISAKEVMNPVTGEPIQIRVGIHTGPVLAGVVGDKMPRYCLFGDTVNTASRMESHGLPSKVHLSPTAHRALKNKGFEIVRRGEIEVKGKGKMTTYFLIQNLNATEDEIMGRPSAPADGKEVCTPGNQVRKSPAVPRNTDHQQQVYKGDPADASNEVTLAGSPVAGRNSTDAVNNQPSPDETKTSVVASGPVLSAFCVVL</sequence>
<evidence type="ECO:0000250" key="1"/>
<evidence type="ECO:0000255" key="2">
    <source>
        <dbReference type="PROSITE-ProRule" id="PRU00099"/>
    </source>
</evidence>
<evidence type="ECO:0000256" key="3">
    <source>
        <dbReference type="SAM" id="MobiDB-lite"/>
    </source>
</evidence>
<keyword id="KW-0141">cGMP biosynthesis</keyword>
<keyword id="KW-0963">Cytoplasm</keyword>
<keyword id="KW-0342">GTP-binding</keyword>
<keyword id="KW-0349">Heme</keyword>
<keyword id="KW-0408">Iron</keyword>
<keyword id="KW-0456">Lyase</keyword>
<keyword id="KW-0479">Metal-binding</keyword>
<keyword id="KW-0547">Nucleotide-binding</keyword>
<keyword id="KW-1185">Reference proteome</keyword>
<accession>P22717</accession>
<comment type="catalytic activity">
    <reaction>
        <text>GTP = 3',5'-cyclic GMP + diphosphate</text>
        <dbReference type="Rhea" id="RHEA:13665"/>
        <dbReference type="ChEBI" id="CHEBI:33019"/>
        <dbReference type="ChEBI" id="CHEBI:37565"/>
        <dbReference type="ChEBI" id="CHEBI:57746"/>
        <dbReference type="EC" id="4.6.1.2"/>
    </reaction>
</comment>
<comment type="cofactor">
    <cofactor evidence="1">
        <name>heme</name>
        <dbReference type="ChEBI" id="CHEBI:30413"/>
    </cofactor>
    <text evidence="1">Binds 1 or 2 heme groups per heterodimer.</text>
</comment>
<comment type="activity regulation">
    <text>Activated by nitric oxide in the presence of magnesium or manganese ions.</text>
</comment>
<comment type="subunit">
    <text>Heterodimer of an alpha and a beta chain.</text>
</comment>
<comment type="subcellular location">
    <subcellularLocation>
        <location>Cytoplasm</location>
    </subcellularLocation>
</comment>
<comment type="tissue specificity">
    <text>Kidney and liver.</text>
</comment>
<comment type="miscellaneous">
    <text>There are two types of guanylate cyclases: soluble forms and membrane-associated receptor forms.</text>
</comment>
<comment type="similarity">
    <text evidence="2">Belongs to the adenylyl cyclase class-4/guanylyl cyclase family.</text>
</comment>
<organism>
    <name type="scientific">Rattus norvegicus</name>
    <name type="common">Rat</name>
    <dbReference type="NCBI Taxonomy" id="10116"/>
    <lineage>
        <taxon>Eukaryota</taxon>
        <taxon>Metazoa</taxon>
        <taxon>Chordata</taxon>
        <taxon>Craniata</taxon>
        <taxon>Vertebrata</taxon>
        <taxon>Euteleostomi</taxon>
        <taxon>Mammalia</taxon>
        <taxon>Eutheria</taxon>
        <taxon>Euarchontoglires</taxon>
        <taxon>Glires</taxon>
        <taxon>Rodentia</taxon>
        <taxon>Myomorpha</taxon>
        <taxon>Muroidea</taxon>
        <taxon>Muridae</taxon>
        <taxon>Murinae</taxon>
        <taxon>Rattus</taxon>
    </lineage>
</organism>
<reference key="1">
    <citation type="journal article" date="1990" name="Biochemistry">
        <title>A new form of guanylyl cyclase is preferentially expressed in rat kidney.</title>
        <authorList>
            <person name="Yuen P.S.T."/>
            <person name="Potter L.R."/>
            <person name="Garbers D.L."/>
        </authorList>
    </citation>
    <scope>NUCLEOTIDE SEQUENCE [MRNA]</scope>
    <source>
        <tissue>Kidney</tissue>
    </source>
</reference>